<accession>O66043</accession>
<accession>D3FV21</accession>
<evidence type="ECO:0000255" key="1">
    <source>
        <dbReference type="HAMAP-Rule" id="MF_01916"/>
    </source>
</evidence>
<dbReference type="EC" id="2.7.8.-" evidence="1"/>
<dbReference type="EMBL" id="U88888">
    <property type="protein sequence ID" value="AAC05444.1"/>
    <property type="molecule type" value="Genomic_DNA"/>
</dbReference>
<dbReference type="EMBL" id="CP001878">
    <property type="protein sequence ID" value="ADC48447.1"/>
    <property type="molecule type" value="Genomic_DNA"/>
</dbReference>
<dbReference type="RefSeq" id="WP_012959725.1">
    <property type="nucleotide sequence ID" value="NC_013791.2"/>
</dbReference>
<dbReference type="SMR" id="O66043"/>
<dbReference type="STRING" id="398511.BpOF4_01900"/>
<dbReference type="KEGG" id="bpf:BpOF4_01900"/>
<dbReference type="eggNOG" id="COG1502">
    <property type="taxonomic scope" value="Bacteria"/>
</dbReference>
<dbReference type="HOGENOM" id="CLU_038053_1_2_9"/>
<dbReference type="BRENDA" id="2.7.8.B10">
    <property type="organism ID" value="11863"/>
</dbReference>
<dbReference type="Proteomes" id="UP000001544">
    <property type="component" value="Chromosome"/>
</dbReference>
<dbReference type="GO" id="GO:0005886">
    <property type="term" value="C:plasma membrane"/>
    <property type="evidence" value="ECO:0007669"/>
    <property type="project" value="UniProtKB-SubCell"/>
</dbReference>
<dbReference type="GO" id="GO:0008808">
    <property type="term" value="F:cardiolipin synthase activity"/>
    <property type="evidence" value="ECO:0007669"/>
    <property type="project" value="InterPro"/>
</dbReference>
<dbReference type="GO" id="GO:0032049">
    <property type="term" value="P:cardiolipin biosynthetic process"/>
    <property type="evidence" value="ECO:0007669"/>
    <property type="project" value="InterPro"/>
</dbReference>
<dbReference type="CDD" id="cd09110">
    <property type="entry name" value="PLDc_CLS_1"/>
    <property type="match status" value="1"/>
</dbReference>
<dbReference type="CDD" id="cd09112">
    <property type="entry name" value="PLDc_CLS_2"/>
    <property type="match status" value="1"/>
</dbReference>
<dbReference type="FunFam" id="3.30.870.10:FF:000014">
    <property type="entry name" value="Cardiolipin synthase"/>
    <property type="match status" value="1"/>
</dbReference>
<dbReference type="FunFam" id="3.30.870.10:FF:000021">
    <property type="entry name" value="Cardiolipin synthase"/>
    <property type="match status" value="1"/>
</dbReference>
<dbReference type="Gene3D" id="3.30.870.10">
    <property type="entry name" value="Endonuclease Chain A"/>
    <property type="match status" value="2"/>
</dbReference>
<dbReference type="HAMAP" id="MF_01916">
    <property type="entry name" value="Cardiolipin_synth_Cls"/>
    <property type="match status" value="1"/>
</dbReference>
<dbReference type="InterPro" id="IPR030874">
    <property type="entry name" value="Cardiolipin_synth_Firmi"/>
</dbReference>
<dbReference type="InterPro" id="IPR022924">
    <property type="entry name" value="Cardiolipin_synthase"/>
</dbReference>
<dbReference type="InterPro" id="IPR027379">
    <property type="entry name" value="CLS_N"/>
</dbReference>
<dbReference type="InterPro" id="IPR025202">
    <property type="entry name" value="PLD-like_dom"/>
</dbReference>
<dbReference type="InterPro" id="IPR001736">
    <property type="entry name" value="PLipase_D/transphosphatidylase"/>
</dbReference>
<dbReference type="NCBIfam" id="TIGR04265">
    <property type="entry name" value="bac_cardiolipin"/>
    <property type="match status" value="1"/>
</dbReference>
<dbReference type="PANTHER" id="PTHR21248">
    <property type="entry name" value="CARDIOLIPIN SYNTHASE"/>
    <property type="match status" value="1"/>
</dbReference>
<dbReference type="PANTHER" id="PTHR21248:SF20">
    <property type="entry name" value="CARDIOLIPIN SYNTHASE YWIE-RELATED"/>
    <property type="match status" value="1"/>
</dbReference>
<dbReference type="Pfam" id="PF13091">
    <property type="entry name" value="PLDc_2"/>
    <property type="match status" value="2"/>
</dbReference>
<dbReference type="Pfam" id="PF13396">
    <property type="entry name" value="PLDc_N"/>
    <property type="match status" value="1"/>
</dbReference>
<dbReference type="SMART" id="SM00155">
    <property type="entry name" value="PLDc"/>
    <property type="match status" value="2"/>
</dbReference>
<dbReference type="SUPFAM" id="SSF56024">
    <property type="entry name" value="Phospholipase D/nuclease"/>
    <property type="match status" value="2"/>
</dbReference>
<dbReference type="PROSITE" id="PS50035">
    <property type="entry name" value="PLD"/>
    <property type="match status" value="2"/>
</dbReference>
<sequence>MKNRLNVLAFFALLFAALYISRGFLQSWMVGTLSVVFTLSVIFIGIIIFFENRHPTKTLTWLLVLAAFPVVGFFFYLMFGQNHRKSKRFSKKAIEDERAFQKIEGQRQLNEEQLKKMGGHQQLLFRLAHKLGKNPISFSSETKVLTDGKETYAHILQALKMAEHHIHLEYYIVRHDDLGNQIKDILISKAKEGVHVRFLYDGVGSWKLSKSYVEELRDAGVEMVSFSPVKLPFLTHTINYRNHRKIIVIDGVVGFVGGLNIGDEYLGKDAYFGYWRDTHLYVRGEAVRTLQLIFLQDWHYQTGETILNQTYLSPSLSMTKGDGGVQMIASGPDTRWEVNKKLFFSMITSAKKSIWIASPYFIPDDDILSALKIAALSGIDVRILVPNRPDKRIVFHASRSYFPELLEAGVKVYEYNRGFMHSKIIIVDHEIASIGTSNMDMRSFHLNFEVNAYLYRTSSVTKLVSDYVYDLEHSNQINFSLFKNRPFFHRLIESTSRLLSPLL</sequence>
<keyword id="KW-1003">Cell membrane</keyword>
<keyword id="KW-0444">Lipid biosynthesis</keyword>
<keyword id="KW-0443">Lipid metabolism</keyword>
<keyword id="KW-0472">Membrane</keyword>
<keyword id="KW-0594">Phospholipid biosynthesis</keyword>
<keyword id="KW-1208">Phospholipid metabolism</keyword>
<keyword id="KW-1185">Reference proteome</keyword>
<keyword id="KW-0677">Repeat</keyword>
<keyword id="KW-0808">Transferase</keyword>
<keyword id="KW-0812">Transmembrane</keyword>
<keyword id="KW-1133">Transmembrane helix</keyword>
<gene>
    <name type="primary">cls</name>
    <name type="ordered locus">BpOF4_01900</name>
</gene>
<feature type="chain" id="PRO_0000201246" description="Cardiolipin synthase">
    <location>
        <begin position="1"/>
        <end position="503"/>
    </location>
</feature>
<feature type="transmembrane region" description="Helical" evidence="1">
    <location>
        <begin position="5"/>
        <end position="25"/>
    </location>
</feature>
<feature type="transmembrane region" description="Helical" evidence="1">
    <location>
        <begin position="30"/>
        <end position="50"/>
    </location>
</feature>
<feature type="transmembrane region" description="Helical" evidence="1">
    <location>
        <begin position="59"/>
        <end position="79"/>
    </location>
</feature>
<feature type="domain" description="PLD phosphodiesterase 1" evidence="1">
    <location>
        <begin position="238"/>
        <end position="265"/>
    </location>
</feature>
<feature type="domain" description="PLD phosphodiesterase 2" evidence="1">
    <location>
        <begin position="416"/>
        <end position="443"/>
    </location>
</feature>
<feature type="active site" evidence="1">
    <location>
        <position position="243"/>
    </location>
</feature>
<feature type="active site" evidence="1">
    <location>
        <position position="245"/>
    </location>
</feature>
<feature type="active site" evidence="1">
    <location>
        <position position="250"/>
    </location>
</feature>
<feature type="active site" evidence="1">
    <location>
        <position position="421"/>
    </location>
</feature>
<feature type="active site" evidence="1">
    <location>
        <position position="423"/>
    </location>
</feature>
<feature type="active site" evidence="1">
    <location>
        <position position="428"/>
    </location>
</feature>
<comment type="function">
    <text>Catalyzes the reversible phosphatidyl group transfer from one phosphatidylglycerol molecule to another to form cardiolipin (CL) (diphosphatidylglycerol) and glycerol.</text>
</comment>
<comment type="catalytic activity">
    <reaction evidence="1">
        <text>2 a 1,2-diacyl-sn-glycero-3-phospho-(1'-sn-glycerol) = a cardiolipin + glycerol</text>
        <dbReference type="Rhea" id="RHEA:31451"/>
        <dbReference type="ChEBI" id="CHEBI:17754"/>
        <dbReference type="ChEBI" id="CHEBI:62237"/>
        <dbReference type="ChEBI" id="CHEBI:64716"/>
    </reaction>
</comment>
<comment type="subcellular location">
    <subcellularLocation>
        <location>Cell membrane</location>
        <topology>Multi-pass membrane protein</topology>
    </subcellularLocation>
</comment>
<comment type="similarity">
    <text evidence="1">Belongs to the phospholipase D family. Cardiolipin synthase subfamily.</text>
</comment>
<reference key="1">
    <citation type="journal article" date="1998" name="Biochim. Biophys. Acta">
        <title>Cloning of the Bacillus firmus OF4 cls gene and characterization of its gene product.</title>
        <authorList>
            <person name="Guo D."/>
            <person name="Tropp B.E."/>
        </authorList>
    </citation>
    <scope>NUCLEOTIDE SEQUENCE [GENOMIC DNA]</scope>
</reference>
<reference key="2">
    <citation type="journal article" date="2011" name="Environ. Microbiol.">
        <title>Genome of alkaliphilic Bacillus pseudofirmus OF4 reveals adaptations that support the ability to grow in an external pH range from 7.5 to 11.4.</title>
        <authorList>
            <person name="Janto B."/>
            <person name="Ahmed A."/>
            <person name="Ito M."/>
            <person name="Liu J."/>
            <person name="Hicks D.B."/>
            <person name="Pagni S."/>
            <person name="Fackelmayer O.J."/>
            <person name="Smith T.A."/>
            <person name="Earl J."/>
            <person name="Elbourne L.D."/>
            <person name="Hassan K."/>
            <person name="Paulsen I.T."/>
            <person name="Kolsto A.B."/>
            <person name="Tourasse N.J."/>
            <person name="Ehrlich G.D."/>
            <person name="Boissy R."/>
            <person name="Ivey D.M."/>
            <person name="Li G."/>
            <person name="Xue Y."/>
            <person name="Ma Y."/>
            <person name="Hu F.Z."/>
            <person name="Krulwich T.A."/>
        </authorList>
    </citation>
    <scope>NUCLEOTIDE SEQUENCE [LARGE SCALE GENOMIC DNA]</scope>
    <source>
        <strain>ATCC BAA-2126 / JCM 17055 / OF4</strain>
    </source>
</reference>
<name>CLS_ALKPO</name>
<protein>
    <recommendedName>
        <fullName evidence="1">Cardiolipin synthase</fullName>
        <shortName evidence="1">CL synthase</shortName>
        <ecNumber evidence="1">2.7.8.-</ecNumber>
    </recommendedName>
</protein>
<proteinExistence type="inferred from homology"/>
<organism>
    <name type="scientific">Alkalihalophilus pseudofirmus (strain ATCC BAA-2126 / JCM 17055 / OF4)</name>
    <name type="common">Bacillus pseudofirmus</name>
    <dbReference type="NCBI Taxonomy" id="398511"/>
    <lineage>
        <taxon>Bacteria</taxon>
        <taxon>Bacillati</taxon>
        <taxon>Bacillota</taxon>
        <taxon>Bacilli</taxon>
        <taxon>Bacillales</taxon>
        <taxon>Bacillaceae</taxon>
        <taxon>Alkalihalophilus</taxon>
    </lineage>
</organism>